<dbReference type="EMBL" id="BC124344">
    <property type="protein sequence ID" value="AAI24345.1"/>
    <property type="molecule type" value="mRNA"/>
</dbReference>
<dbReference type="RefSeq" id="NP_001070059.1">
    <property type="nucleotide sequence ID" value="NM_001076591.1"/>
</dbReference>
<dbReference type="SMR" id="Q08C81"/>
<dbReference type="FunCoup" id="Q08C81">
    <property type="interactions" value="2006"/>
</dbReference>
<dbReference type="STRING" id="7955.ENSDARP00000054409"/>
<dbReference type="PaxDb" id="7955-ENSDARP00000054409"/>
<dbReference type="Ensembl" id="ENSDART00000054410">
    <property type="protein sequence ID" value="ENSDARP00000054409"/>
    <property type="gene ID" value="ENSDARG00000037392"/>
</dbReference>
<dbReference type="Ensembl" id="ENSDART00000191087">
    <property type="protein sequence ID" value="ENSDARP00000149969"/>
    <property type="gene ID" value="ENSDARG00000114246"/>
</dbReference>
<dbReference type="GeneID" id="767651"/>
<dbReference type="KEGG" id="dre:767651"/>
<dbReference type="AGR" id="ZFIN:ZDB-GENE-060929-232"/>
<dbReference type="CTD" id="767651"/>
<dbReference type="ZFIN" id="ZDB-GENE-060929-232">
    <property type="gene designation" value="med19a"/>
</dbReference>
<dbReference type="eggNOG" id="KOG4043">
    <property type="taxonomic scope" value="Eukaryota"/>
</dbReference>
<dbReference type="HOGENOM" id="CLU_098332_0_0_1"/>
<dbReference type="InParanoid" id="Q08C81"/>
<dbReference type="OMA" id="RGMTTPI"/>
<dbReference type="OrthoDB" id="10044050at2759"/>
<dbReference type="PhylomeDB" id="Q08C81"/>
<dbReference type="TreeFam" id="TF317417"/>
<dbReference type="PRO" id="PR:Q08C81"/>
<dbReference type="Proteomes" id="UP000000437">
    <property type="component" value="Alternate scaffold 14"/>
</dbReference>
<dbReference type="Proteomes" id="UP000000437">
    <property type="component" value="Chromosome 14"/>
</dbReference>
<dbReference type="Bgee" id="ENSDARG00000037392">
    <property type="expression patterns" value="Expressed in gastrula and 22 other cell types or tissues"/>
</dbReference>
<dbReference type="GO" id="GO:0016592">
    <property type="term" value="C:mediator complex"/>
    <property type="evidence" value="ECO:0000318"/>
    <property type="project" value="GO_Central"/>
</dbReference>
<dbReference type="GO" id="GO:0003712">
    <property type="term" value="F:transcription coregulator activity"/>
    <property type="evidence" value="ECO:0007669"/>
    <property type="project" value="InterPro"/>
</dbReference>
<dbReference type="GO" id="GO:0045944">
    <property type="term" value="P:positive regulation of transcription by RNA polymerase II"/>
    <property type="evidence" value="ECO:0000318"/>
    <property type="project" value="GO_Central"/>
</dbReference>
<dbReference type="InterPro" id="IPR019403">
    <property type="entry name" value="Mediator_Med19_met"/>
</dbReference>
<dbReference type="PANTHER" id="PTHR22536">
    <property type="entry name" value="LUNG CANCER METASTASIS-RELATED LCMR1 PROTEIN"/>
    <property type="match status" value="1"/>
</dbReference>
<dbReference type="PANTHER" id="PTHR22536:SF1">
    <property type="entry name" value="MEDIATOR OF RNA POLYMERASE II TRANSCRIPTION SUBUNIT 19"/>
    <property type="match status" value="1"/>
</dbReference>
<dbReference type="Pfam" id="PF10278">
    <property type="entry name" value="Med19"/>
    <property type="match status" value="1"/>
</dbReference>
<organism>
    <name type="scientific">Danio rerio</name>
    <name type="common">Zebrafish</name>
    <name type="synonym">Brachydanio rerio</name>
    <dbReference type="NCBI Taxonomy" id="7955"/>
    <lineage>
        <taxon>Eukaryota</taxon>
        <taxon>Metazoa</taxon>
        <taxon>Chordata</taxon>
        <taxon>Craniata</taxon>
        <taxon>Vertebrata</taxon>
        <taxon>Euteleostomi</taxon>
        <taxon>Actinopterygii</taxon>
        <taxon>Neopterygii</taxon>
        <taxon>Teleostei</taxon>
        <taxon>Ostariophysi</taxon>
        <taxon>Cypriniformes</taxon>
        <taxon>Danionidae</taxon>
        <taxon>Danioninae</taxon>
        <taxon>Danio</taxon>
    </lineage>
</organism>
<protein>
    <recommendedName>
        <fullName>Mediator of RNA polymerase II transcription subunit 19-A</fullName>
    </recommendedName>
    <alternativeName>
        <fullName>Mediator complex subunit 19-A</fullName>
    </alternativeName>
</protein>
<evidence type="ECO:0000250" key="1"/>
<evidence type="ECO:0000256" key="2">
    <source>
        <dbReference type="SAM" id="MobiDB-lite"/>
    </source>
</evidence>
<evidence type="ECO:0000305" key="3"/>
<feature type="chain" id="PRO_0000304769" description="Mediator of RNA polymerase II transcription subunit 19-A">
    <location>
        <begin position="1"/>
        <end position="242"/>
    </location>
</feature>
<feature type="region of interest" description="Disordered" evidence="2">
    <location>
        <begin position="1"/>
        <end position="33"/>
    </location>
</feature>
<feature type="region of interest" description="Disordered" evidence="2">
    <location>
        <begin position="171"/>
        <end position="242"/>
    </location>
</feature>
<feature type="compositionally biased region" description="Polar residues" evidence="2">
    <location>
        <begin position="1"/>
        <end position="15"/>
    </location>
</feature>
<feature type="compositionally biased region" description="Basic residues" evidence="2">
    <location>
        <begin position="171"/>
        <end position="184"/>
    </location>
</feature>
<feature type="compositionally biased region" description="Basic and acidic residues" evidence="2">
    <location>
        <begin position="193"/>
        <end position="210"/>
    </location>
</feature>
<feature type="compositionally biased region" description="Basic residues" evidence="2">
    <location>
        <begin position="211"/>
        <end position="223"/>
    </location>
</feature>
<feature type="compositionally biased region" description="Polar residues" evidence="2">
    <location>
        <begin position="232"/>
        <end position="242"/>
    </location>
</feature>
<reference key="1">
    <citation type="submission" date="2006-09" db="EMBL/GenBank/DDBJ databases">
        <authorList>
            <consortium name="NIH - Zebrafish Gene Collection (ZGC) project"/>
        </authorList>
    </citation>
    <scope>NUCLEOTIDE SEQUENCE [LARGE SCALE MRNA]</scope>
    <source>
        <tissue>Larval eye</tissue>
    </source>
</reference>
<proteinExistence type="evidence at transcript level"/>
<sequence>MTEIFSTLFGQNDAQPPSGPAALGFAPGKPPPSMPPNQAPIAAQMPGQLGDDGPLLRKPGAMNEPFYLLRELPVGNDLTGNTNLITHYNLEHAYNKFCGKKVKEKLSNFLPELPGMIDCPGVQDGSSLRSLIEKPPVCGNSFSPLTGALLTGFRLHTGPLPEQYRLMHIQPPKKKSKHKHRHHHPQDPLPLETRTDPTKKKKKKDNEPERRKKKKDKKKKKNRHSPDHPGVTGSQPNSNSLR</sequence>
<keyword id="KW-0010">Activator</keyword>
<keyword id="KW-0539">Nucleus</keyword>
<keyword id="KW-1185">Reference proteome</keyword>
<keyword id="KW-0804">Transcription</keyword>
<keyword id="KW-0805">Transcription regulation</keyword>
<accession>Q08C81</accession>
<gene>
    <name type="primary">med19a</name>
    <name type="ORF">zgc:153400</name>
</gene>
<comment type="function">
    <text evidence="1">Component of the Mediator complex, a coactivator involved in the regulated transcription of nearly all RNA polymerase II-dependent genes. Mediator functions as a bridge to convey information from gene-specific regulatory proteins to the basal RNA polymerase II transcription machinery. Mediator is recruited to promoters by direct interactions with regulatory proteins and serves as a scaffold for the assembly of a functional preinitiation complex with RNA polymerase II and the general transcription factors (By similarity).</text>
</comment>
<comment type="subunit">
    <text evidence="1">Component of the Mediator complex.</text>
</comment>
<comment type="subcellular location">
    <subcellularLocation>
        <location evidence="3">Nucleus</location>
    </subcellularLocation>
</comment>
<comment type="similarity">
    <text evidence="3">Belongs to the Mediator complex subunit 19 family.</text>
</comment>
<name>MD19A_DANRE</name>